<organism>
    <name type="scientific">Homo sapiens</name>
    <name type="common">Human</name>
    <dbReference type="NCBI Taxonomy" id="9606"/>
    <lineage>
        <taxon>Eukaryota</taxon>
        <taxon>Metazoa</taxon>
        <taxon>Chordata</taxon>
        <taxon>Craniata</taxon>
        <taxon>Vertebrata</taxon>
        <taxon>Euteleostomi</taxon>
        <taxon>Mammalia</taxon>
        <taxon>Eutheria</taxon>
        <taxon>Euarchontoglires</taxon>
        <taxon>Primates</taxon>
        <taxon>Haplorrhini</taxon>
        <taxon>Catarrhini</taxon>
        <taxon>Hominidae</taxon>
        <taxon>Homo</taxon>
    </lineage>
</organism>
<feature type="initiator methionine" description="Removed" evidence="4 5 6">
    <location>
        <position position="1"/>
    </location>
</feature>
<feature type="chain" id="PRO_0000209706" description="Protein AAR2 homolog">
    <location>
        <begin position="2"/>
        <end position="384"/>
    </location>
</feature>
<feature type="modified residue" description="N-acetylalanine" evidence="4 5 6">
    <location>
        <position position="2"/>
    </location>
</feature>
<feature type="sequence variant" id="VAR_048127" description="In dbSNP:rs6121183.">
    <original>P</original>
    <variation>T</variation>
    <location>
        <position position="124"/>
    </location>
</feature>
<feature type="sequence conflict" description="In Ref. 2; CAB55913." evidence="3" ref="2">
    <original>F</original>
    <variation>L</variation>
    <location>
        <position position="45"/>
    </location>
</feature>
<feature type="sequence conflict" description="In Ref. 1; AAD27732." evidence="3" ref="1">
    <original>E</original>
    <variation>K</variation>
    <location>
        <position position="70"/>
    </location>
</feature>
<feature type="sequence conflict" description="In Ref. 1; AAD27732." evidence="3" ref="1">
    <original>S</original>
    <variation>N</variation>
    <location>
        <position position="92"/>
    </location>
</feature>
<feature type="sequence conflict" description="In Ref. 2; CAB55913." evidence="3" ref="2">
    <original>E</original>
    <variation>K</variation>
    <location>
        <position position="146"/>
    </location>
</feature>
<feature type="sequence conflict" description="In Ref. 2; CAB55913." evidence="3" ref="2">
    <original>L</original>
    <variation>H</variation>
    <location>
        <position position="240"/>
    </location>
</feature>
<feature type="sequence conflict" description="In Ref. 1; AAD27732." evidence="3" ref="1">
    <original>N</original>
    <variation>I</variation>
    <location>
        <position position="241"/>
    </location>
</feature>
<feature type="sequence conflict" description="In Ref. 1; AAD27732." evidence="3" ref="1">
    <original>N</original>
    <variation>H</variation>
    <location>
        <position position="279"/>
    </location>
</feature>
<feature type="sequence conflict" description="In Ref. 1; AAD27732." evidence="3" ref="1">
    <original>I</original>
    <variation>M</variation>
    <location>
        <position position="299"/>
    </location>
</feature>
<feature type="helix" evidence="7">
    <location>
        <begin position="11"/>
        <end position="13"/>
    </location>
</feature>
<feature type="helix" evidence="7">
    <location>
        <begin position="14"/>
        <end position="17"/>
    </location>
</feature>
<feature type="strand" evidence="7">
    <location>
        <begin position="19"/>
        <end position="25"/>
    </location>
</feature>
<feature type="strand" evidence="7">
    <location>
        <begin position="31"/>
        <end position="34"/>
    </location>
</feature>
<feature type="strand" evidence="7">
    <location>
        <begin position="37"/>
        <end position="40"/>
    </location>
</feature>
<feature type="strand" evidence="7">
    <location>
        <begin position="47"/>
        <end position="51"/>
    </location>
</feature>
<feature type="strand" evidence="7">
    <location>
        <begin position="53"/>
        <end position="61"/>
    </location>
</feature>
<feature type="strand" evidence="7">
    <location>
        <begin position="64"/>
        <end position="67"/>
    </location>
</feature>
<feature type="strand" evidence="7">
    <location>
        <begin position="75"/>
        <end position="81"/>
    </location>
</feature>
<feature type="strand" evidence="7">
    <location>
        <begin position="86"/>
        <end position="92"/>
    </location>
</feature>
<feature type="turn" evidence="7">
    <location>
        <begin position="93"/>
        <end position="96"/>
    </location>
</feature>
<feature type="strand" evidence="7">
    <location>
        <begin position="97"/>
        <end position="99"/>
    </location>
</feature>
<feature type="helix" evidence="7">
    <location>
        <begin position="105"/>
        <end position="118"/>
    </location>
</feature>
<feature type="helix" evidence="7">
    <location>
        <begin position="119"/>
        <end position="121"/>
    </location>
</feature>
<feature type="strand" evidence="7">
    <location>
        <begin position="122"/>
        <end position="124"/>
    </location>
</feature>
<feature type="helix" evidence="7">
    <location>
        <begin position="127"/>
        <end position="129"/>
    </location>
</feature>
<feature type="helix" evidence="7">
    <location>
        <begin position="130"/>
        <end position="137"/>
    </location>
</feature>
<feature type="helix" evidence="7">
    <location>
        <begin position="142"/>
        <end position="148"/>
    </location>
</feature>
<feature type="helix" evidence="7">
    <location>
        <begin position="222"/>
        <end position="230"/>
    </location>
</feature>
<feature type="helix" evidence="7">
    <location>
        <begin position="233"/>
        <end position="243"/>
    </location>
</feature>
<feature type="helix" evidence="7">
    <location>
        <begin position="250"/>
        <end position="263"/>
    </location>
</feature>
<feature type="helix" evidence="7">
    <location>
        <begin position="268"/>
        <end position="282"/>
    </location>
</feature>
<feature type="helix" evidence="7">
    <location>
        <begin position="285"/>
        <end position="290"/>
    </location>
</feature>
<feature type="helix" evidence="7">
    <location>
        <begin position="292"/>
        <end position="306"/>
    </location>
</feature>
<feature type="helix" evidence="7">
    <location>
        <begin position="323"/>
        <end position="335"/>
    </location>
</feature>
<feature type="helix" evidence="7">
    <location>
        <begin position="342"/>
        <end position="359"/>
    </location>
</feature>
<feature type="helix" evidence="7">
    <location>
        <begin position="368"/>
        <end position="370"/>
    </location>
</feature>
<reference key="1">
    <citation type="journal article" date="2000" name="Genome Res.">
        <title>Identification of novel human genes evolutionarily conserved in Caenorhabditis elegans by comparative proteomics.</title>
        <authorList>
            <person name="Lai C.-H."/>
            <person name="Chou C.-Y."/>
            <person name="Ch'ang L.-Y."/>
            <person name="Liu C.-S."/>
            <person name="Lin W.-C."/>
        </authorList>
    </citation>
    <scope>NUCLEOTIDE SEQUENCE [LARGE SCALE MRNA]</scope>
</reference>
<reference key="2">
    <citation type="journal article" date="2001" name="Genome Res.">
        <title>Towards a catalog of human genes and proteins: sequencing and analysis of 500 novel complete protein coding human cDNAs.</title>
        <authorList>
            <person name="Wiemann S."/>
            <person name="Weil B."/>
            <person name="Wellenreuther R."/>
            <person name="Gassenhuber J."/>
            <person name="Glassl S."/>
            <person name="Ansorge W."/>
            <person name="Boecher M."/>
            <person name="Bloecker H."/>
            <person name="Bauersachs S."/>
            <person name="Blum H."/>
            <person name="Lauber J."/>
            <person name="Duesterhoeft A."/>
            <person name="Beyer A."/>
            <person name="Koehrer K."/>
            <person name="Strack N."/>
            <person name="Mewes H.-W."/>
            <person name="Ottenwaelder B."/>
            <person name="Obermaier B."/>
            <person name="Tampe J."/>
            <person name="Heubner D."/>
            <person name="Wambutt R."/>
            <person name="Korn B."/>
            <person name="Klein M."/>
            <person name="Poustka A."/>
        </authorList>
    </citation>
    <scope>NUCLEOTIDE SEQUENCE [LARGE SCALE MRNA]</scope>
    <source>
        <tissue>Brain</tissue>
    </source>
</reference>
<reference key="3">
    <citation type="journal article" date="2001" name="Nature">
        <title>The DNA sequence and comparative analysis of human chromosome 20.</title>
        <authorList>
            <person name="Deloukas P."/>
            <person name="Matthews L.H."/>
            <person name="Ashurst J.L."/>
            <person name="Burton J."/>
            <person name="Gilbert J.G.R."/>
            <person name="Jones M."/>
            <person name="Stavrides G."/>
            <person name="Almeida J.P."/>
            <person name="Babbage A.K."/>
            <person name="Bagguley C.L."/>
            <person name="Bailey J."/>
            <person name="Barlow K.F."/>
            <person name="Bates K.N."/>
            <person name="Beard L.M."/>
            <person name="Beare D.M."/>
            <person name="Beasley O.P."/>
            <person name="Bird C.P."/>
            <person name="Blakey S.E."/>
            <person name="Bridgeman A.M."/>
            <person name="Brown A.J."/>
            <person name="Buck D."/>
            <person name="Burrill W.D."/>
            <person name="Butler A.P."/>
            <person name="Carder C."/>
            <person name="Carter N.P."/>
            <person name="Chapman J.C."/>
            <person name="Clamp M."/>
            <person name="Clark G."/>
            <person name="Clark L.N."/>
            <person name="Clark S.Y."/>
            <person name="Clee C.M."/>
            <person name="Clegg S."/>
            <person name="Cobley V.E."/>
            <person name="Collier R.E."/>
            <person name="Connor R.E."/>
            <person name="Corby N.R."/>
            <person name="Coulson A."/>
            <person name="Coville G.J."/>
            <person name="Deadman R."/>
            <person name="Dhami P.D."/>
            <person name="Dunn M."/>
            <person name="Ellington A.G."/>
            <person name="Frankland J.A."/>
            <person name="Fraser A."/>
            <person name="French L."/>
            <person name="Garner P."/>
            <person name="Grafham D.V."/>
            <person name="Griffiths C."/>
            <person name="Griffiths M.N.D."/>
            <person name="Gwilliam R."/>
            <person name="Hall R.E."/>
            <person name="Hammond S."/>
            <person name="Harley J.L."/>
            <person name="Heath P.D."/>
            <person name="Ho S."/>
            <person name="Holden J.L."/>
            <person name="Howden P.J."/>
            <person name="Huckle E."/>
            <person name="Hunt A.R."/>
            <person name="Hunt S.E."/>
            <person name="Jekosch K."/>
            <person name="Johnson C.M."/>
            <person name="Johnson D."/>
            <person name="Kay M.P."/>
            <person name="Kimberley A.M."/>
            <person name="King A."/>
            <person name="Knights A."/>
            <person name="Laird G.K."/>
            <person name="Lawlor S."/>
            <person name="Lehvaeslaiho M.H."/>
            <person name="Leversha M.A."/>
            <person name="Lloyd C."/>
            <person name="Lloyd D.M."/>
            <person name="Lovell J.D."/>
            <person name="Marsh V.L."/>
            <person name="Martin S.L."/>
            <person name="McConnachie L.J."/>
            <person name="McLay K."/>
            <person name="McMurray A.A."/>
            <person name="Milne S.A."/>
            <person name="Mistry D."/>
            <person name="Moore M.J.F."/>
            <person name="Mullikin J.C."/>
            <person name="Nickerson T."/>
            <person name="Oliver K."/>
            <person name="Parker A."/>
            <person name="Patel R."/>
            <person name="Pearce T.A.V."/>
            <person name="Peck A.I."/>
            <person name="Phillimore B.J.C.T."/>
            <person name="Prathalingam S.R."/>
            <person name="Plumb R.W."/>
            <person name="Ramsay H."/>
            <person name="Rice C.M."/>
            <person name="Ross M.T."/>
            <person name="Scott C.E."/>
            <person name="Sehra H.K."/>
            <person name="Shownkeen R."/>
            <person name="Sims S."/>
            <person name="Skuce C.D."/>
            <person name="Smith M.L."/>
            <person name="Soderlund C."/>
            <person name="Steward C.A."/>
            <person name="Sulston J.E."/>
            <person name="Swann R.M."/>
            <person name="Sycamore N."/>
            <person name="Taylor R."/>
            <person name="Tee L."/>
            <person name="Thomas D.W."/>
            <person name="Thorpe A."/>
            <person name="Tracey A."/>
            <person name="Tromans A.C."/>
            <person name="Vaudin M."/>
            <person name="Wall M."/>
            <person name="Wallis J.M."/>
            <person name="Whitehead S.L."/>
            <person name="Whittaker P."/>
            <person name="Willey D.L."/>
            <person name="Williams L."/>
            <person name="Williams S.A."/>
            <person name="Wilming L."/>
            <person name="Wray P.W."/>
            <person name="Hubbard T."/>
            <person name="Durbin R.M."/>
            <person name="Bentley D.R."/>
            <person name="Beck S."/>
            <person name="Rogers J."/>
        </authorList>
    </citation>
    <scope>NUCLEOTIDE SEQUENCE [LARGE SCALE GENOMIC DNA]</scope>
</reference>
<reference key="4">
    <citation type="submission" date="2005-09" db="EMBL/GenBank/DDBJ databases">
        <authorList>
            <person name="Mural R.J."/>
            <person name="Istrail S."/>
            <person name="Sutton G.G."/>
            <person name="Florea L."/>
            <person name="Halpern A.L."/>
            <person name="Mobarry C.M."/>
            <person name="Lippert R."/>
            <person name="Walenz B."/>
            <person name="Shatkay H."/>
            <person name="Dew I."/>
            <person name="Miller J.R."/>
            <person name="Flanigan M.J."/>
            <person name="Edwards N.J."/>
            <person name="Bolanos R."/>
            <person name="Fasulo D."/>
            <person name="Halldorsson B.V."/>
            <person name="Hannenhalli S."/>
            <person name="Turner R."/>
            <person name="Yooseph S."/>
            <person name="Lu F."/>
            <person name="Nusskern D.R."/>
            <person name="Shue B.C."/>
            <person name="Zheng X.H."/>
            <person name="Zhong F."/>
            <person name="Delcher A.L."/>
            <person name="Huson D.H."/>
            <person name="Kravitz S.A."/>
            <person name="Mouchard L."/>
            <person name="Reinert K."/>
            <person name="Remington K.A."/>
            <person name="Clark A.G."/>
            <person name="Waterman M.S."/>
            <person name="Eichler E.E."/>
            <person name="Adams M.D."/>
            <person name="Hunkapiller M.W."/>
            <person name="Myers E.W."/>
            <person name="Venter J.C."/>
        </authorList>
    </citation>
    <scope>NUCLEOTIDE SEQUENCE [LARGE SCALE GENOMIC DNA]</scope>
</reference>
<reference key="5">
    <citation type="journal article" date="2004" name="Genome Res.">
        <title>The status, quality, and expansion of the NIH full-length cDNA project: the Mammalian Gene Collection (MGC).</title>
        <authorList>
            <consortium name="The MGC Project Team"/>
        </authorList>
    </citation>
    <scope>NUCLEOTIDE SEQUENCE [LARGE SCALE MRNA]</scope>
    <source>
        <tissue>Lung</tissue>
        <tissue>Skin</tissue>
    </source>
</reference>
<reference key="6">
    <citation type="submission" date="1998-12" db="EMBL/GenBank/DDBJ databases">
        <title>Functional prediction of the coding sequences of 32 new genes deduced by analysis of cDNA clones from human fetal liver.</title>
        <authorList>
            <person name="Zhang C."/>
            <person name="Yu Y."/>
            <person name="Zhang S."/>
            <person name="Ouyang S."/>
            <person name="Luo L."/>
            <person name="Wei H."/>
            <person name="Zhou G."/>
            <person name="Zhou W."/>
            <person name="Bi J."/>
            <person name="Zhang Y."/>
            <person name="Liu M."/>
            <person name="He F."/>
        </authorList>
    </citation>
    <scope>NUCLEOTIDE SEQUENCE [LARGE SCALE MRNA] OF 228-384</scope>
    <source>
        <tissue>Fetal liver</tissue>
    </source>
</reference>
<reference key="7">
    <citation type="journal article" date="2009" name="Anal. Chem.">
        <title>Lys-N and trypsin cover complementary parts of the phosphoproteome in a refined SCX-based approach.</title>
        <authorList>
            <person name="Gauci S."/>
            <person name="Helbig A.O."/>
            <person name="Slijper M."/>
            <person name="Krijgsveld J."/>
            <person name="Heck A.J."/>
            <person name="Mohammed S."/>
        </authorList>
    </citation>
    <scope>ACETYLATION [LARGE SCALE ANALYSIS] AT ALA-2</scope>
    <scope>CLEAVAGE OF INITIATOR METHIONINE [LARGE SCALE ANALYSIS]</scope>
    <scope>IDENTIFICATION BY MASS SPECTROMETRY [LARGE SCALE ANALYSIS]</scope>
</reference>
<reference key="8">
    <citation type="journal article" date="2011" name="BMC Syst. Biol.">
        <title>Initial characterization of the human central proteome.</title>
        <authorList>
            <person name="Burkard T.R."/>
            <person name="Planyavsky M."/>
            <person name="Kaupe I."/>
            <person name="Breitwieser F.P."/>
            <person name="Buerckstuemmer T."/>
            <person name="Bennett K.L."/>
            <person name="Superti-Furga G."/>
            <person name="Colinge J."/>
        </authorList>
    </citation>
    <scope>IDENTIFICATION BY MASS SPECTROMETRY [LARGE SCALE ANALYSIS]</scope>
</reference>
<reference key="9">
    <citation type="journal article" date="2012" name="Mol. Cell. Proteomics">
        <title>Comparative large-scale characterisation of plant vs. mammal proteins reveals similar and idiosyncratic N-alpha acetylation features.</title>
        <authorList>
            <person name="Bienvenut W.V."/>
            <person name="Sumpton D."/>
            <person name="Martinez A."/>
            <person name="Lilla S."/>
            <person name="Espagne C."/>
            <person name="Meinnel T."/>
            <person name="Giglione C."/>
        </authorList>
    </citation>
    <scope>ACETYLATION [LARGE SCALE ANALYSIS] AT ALA-2</scope>
    <scope>CLEAVAGE OF INITIATOR METHIONINE [LARGE SCALE ANALYSIS]</scope>
    <scope>IDENTIFICATION BY MASS SPECTROMETRY [LARGE SCALE ANALYSIS]</scope>
</reference>
<reference key="10">
    <citation type="journal article" date="2012" name="Proc. Natl. Acad. Sci. U.S.A.">
        <title>N-terminal acetylome analyses and functional insights of the N-terminal acetyltransferase NatB.</title>
        <authorList>
            <person name="Van Damme P."/>
            <person name="Lasa M."/>
            <person name="Polevoda B."/>
            <person name="Gazquez C."/>
            <person name="Elosegui-Artola A."/>
            <person name="Kim D.S."/>
            <person name="De Juan-Pardo E."/>
            <person name="Demeyer K."/>
            <person name="Hole K."/>
            <person name="Larrea E."/>
            <person name="Timmerman E."/>
            <person name="Prieto J."/>
            <person name="Arnesen T."/>
            <person name="Sherman F."/>
            <person name="Gevaert K."/>
            <person name="Aldabe R."/>
        </authorList>
    </citation>
    <scope>ACETYLATION [LARGE SCALE ANALYSIS] AT ALA-2</scope>
    <scope>CLEAVAGE OF INITIATOR METHIONINE [LARGE SCALE ANALYSIS]</scope>
    <scope>IDENTIFICATION BY MASS SPECTROMETRY [LARGE SCALE ANALYSIS]</scope>
</reference>
<reference key="11">
    <citation type="journal article" date="2015" name="Acta Crystallogr. F">
        <title>Crystallization and biochemical characterization of the human spliceosomal Aar2-Prp8(RNaseH) complex.</title>
        <authorList>
            <person name="Santos K."/>
            <person name="Preussner M."/>
            <person name="Heroven A.C."/>
            <person name="Weber G."/>
        </authorList>
    </citation>
    <scope>CRYSTALLIZATION</scope>
    <scope>INTERACTION WITH PRPF8</scope>
</reference>
<name>AAR2_HUMAN</name>
<protein>
    <recommendedName>
        <fullName>Protein AAR2 homolog</fullName>
    </recommendedName>
    <alternativeName>
        <fullName>AAR2 splicing factor homolog</fullName>
    </alternativeName>
</protein>
<comment type="function">
    <text evidence="1">Component of the U5 snRNP complex that is required for spliceosome assembly and for pre-mRNA splicing.</text>
</comment>
<comment type="subunit">
    <text evidence="1 2">Interacts with PRPF8 (via RNase H homology domain) (PubMed:26527271). Component of a U5 snRNP complex that contains PRPF8 (By similarity).</text>
</comment>
<comment type="interaction">
    <interactant intactId="EBI-748721">
        <id>Q9Y312</id>
    </interactant>
    <interactant intactId="EBI-748732">
        <id>Q56P03</id>
        <label>EAPP</label>
    </interactant>
    <organismsDiffer>false</organismsDiffer>
    <experiments>5</experiments>
</comment>
<comment type="similarity">
    <text evidence="3">Belongs to the AAR2 family.</text>
</comment>
<comment type="sequence caution" evidence="3">
    <conflict type="erroneous initiation">
        <sequence resource="EMBL-CDS" id="AAF29578"/>
    </conflict>
    <text>Truncated N-terminus.</text>
</comment>
<keyword id="KW-0002">3D-structure</keyword>
<keyword id="KW-0007">Acetylation</keyword>
<keyword id="KW-0507">mRNA processing</keyword>
<keyword id="KW-0508">mRNA splicing</keyword>
<keyword id="KW-1267">Proteomics identification</keyword>
<keyword id="KW-1185">Reference proteome</keyword>
<keyword id="KW-0747">Spliceosome</keyword>
<accession>Q9Y312</accession>
<accession>E1P5S7</accession>
<accession>Q9H4F9</accession>
<accession>Q9P1P3</accession>
<accession>Q9UFK9</accession>
<dbReference type="EMBL" id="AF132957">
    <property type="protein sequence ID" value="AAD27732.1"/>
    <property type="molecule type" value="mRNA"/>
</dbReference>
<dbReference type="EMBL" id="AL117419">
    <property type="protein sequence ID" value="CAB55913.1"/>
    <property type="molecule type" value="mRNA"/>
</dbReference>
<dbReference type="EMBL" id="AL121895">
    <property type="status" value="NOT_ANNOTATED_CDS"/>
    <property type="molecule type" value="Genomic_DNA"/>
</dbReference>
<dbReference type="EMBL" id="CH471077">
    <property type="protein sequence ID" value="EAW76141.1"/>
    <property type="molecule type" value="Genomic_DNA"/>
</dbReference>
<dbReference type="EMBL" id="CH471077">
    <property type="protein sequence ID" value="EAW76142.1"/>
    <property type="molecule type" value="Genomic_DNA"/>
</dbReference>
<dbReference type="EMBL" id="CH471077">
    <property type="protein sequence ID" value="EAW76143.1"/>
    <property type="molecule type" value="Genomic_DNA"/>
</dbReference>
<dbReference type="EMBL" id="BC001751">
    <property type="protein sequence ID" value="AAH01751.1"/>
    <property type="molecule type" value="mRNA"/>
</dbReference>
<dbReference type="EMBL" id="BC019311">
    <property type="protein sequence ID" value="AAH19311.1"/>
    <property type="molecule type" value="mRNA"/>
</dbReference>
<dbReference type="EMBL" id="AF113672">
    <property type="protein sequence ID" value="AAF29578.1"/>
    <property type="status" value="ALT_INIT"/>
    <property type="molecule type" value="mRNA"/>
</dbReference>
<dbReference type="CCDS" id="CCDS13273.1"/>
<dbReference type="PIR" id="T17223">
    <property type="entry name" value="T17223"/>
</dbReference>
<dbReference type="RefSeq" id="NP_001258803.1">
    <property type="nucleotide sequence ID" value="NM_001271874.2"/>
</dbReference>
<dbReference type="RefSeq" id="NP_056326.2">
    <property type="nucleotide sequence ID" value="NM_015511.4"/>
</dbReference>
<dbReference type="RefSeq" id="XP_006723833.1">
    <property type="nucleotide sequence ID" value="XM_006723770.4"/>
</dbReference>
<dbReference type="RefSeq" id="XP_011527064.1">
    <property type="nucleotide sequence ID" value="XM_011528762.3"/>
</dbReference>
<dbReference type="RefSeq" id="XP_011527065.1">
    <property type="nucleotide sequence ID" value="XM_011528763.3"/>
</dbReference>
<dbReference type="RefSeq" id="XP_047296038.1">
    <property type="nucleotide sequence ID" value="XM_047440082.1"/>
</dbReference>
<dbReference type="RefSeq" id="XP_054179291.1">
    <property type="nucleotide sequence ID" value="XM_054323316.1"/>
</dbReference>
<dbReference type="RefSeq" id="XP_054179292.1">
    <property type="nucleotide sequence ID" value="XM_054323317.1"/>
</dbReference>
<dbReference type="RefSeq" id="XP_054179293.1">
    <property type="nucleotide sequence ID" value="XM_054323318.1"/>
</dbReference>
<dbReference type="RefSeq" id="XP_054179294.1">
    <property type="nucleotide sequence ID" value="XM_054323319.1"/>
</dbReference>
<dbReference type="PDB" id="7PJH">
    <property type="method" value="X-ray"/>
    <property type="resolution" value="2.35 A"/>
    <property type="chains" value="A=1-384"/>
</dbReference>
<dbReference type="PDBsum" id="7PJH"/>
<dbReference type="SMR" id="Q9Y312"/>
<dbReference type="BioGRID" id="117464">
    <property type="interactions" value="685"/>
</dbReference>
<dbReference type="FunCoup" id="Q9Y312">
    <property type="interactions" value="1781"/>
</dbReference>
<dbReference type="IntAct" id="Q9Y312">
    <property type="interactions" value="67"/>
</dbReference>
<dbReference type="MINT" id="Q9Y312"/>
<dbReference type="STRING" id="9606.ENSP00000363043"/>
<dbReference type="GlyGen" id="Q9Y312">
    <property type="glycosylation" value="2 sites, 1 O-linked glycan (1 site)"/>
</dbReference>
<dbReference type="iPTMnet" id="Q9Y312"/>
<dbReference type="MetOSite" id="Q9Y312"/>
<dbReference type="PhosphoSitePlus" id="Q9Y312"/>
<dbReference type="BioMuta" id="AAR2"/>
<dbReference type="DMDM" id="24211603"/>
<dbReference type="jPOST" id="Q9Y312"/>
<dbReference type="MassIVE" id="Q9Y312"/>
<dbReference type="PaxDb" id="9606-ENSP00000363043"/>
<dbReference type="PeptideAtlas" id="Q9Y312"/>
<dbReference type="ProteomicsDB" id="85957"/>
<dbReference type="Pumba" id="Q9Y312"/>
<dbReference type="Antibodypedia" id="26501">
    <property type="antibodies" value="81 antibodies from 20 providers"/>
</dbReference>
<dbReference type="DNASU" id="25980"/>
<dbReference type="Ensembl" id="ENST00000320849.9">
    <property type="protein sequence ID" value="ENSP00000313674.4"/>
    <property type="gene ID" value="ENSG00000131043.13"/>
</dbReference>
<dbReference type="Ensembl" id="ENST00000373932.3">
    <property type="protein sequence ID" value="ENSP00000363043.3"/>
    <property type="gene ID" value="ENSG00000131043.13"/>
</dbReference>
<dbReference type="Ensembl" id="ENST00000679667.1">
    <property type="protein sequence ID" value="ENSP00000506354.1"/>
    <property type="gene ID" value="ENSG00000131043.13"/>
</dbReference>
<dbReference type="Ensembl" id="ENST00000680247.1">
    <property type="protein sequence ID" value="ENSP00000505295.1"/>
    <property type="gene ID" value="ENSG00000131043.13"/>
</dbReference>
<dbReference type="Ensembl" id="ENST00000680639.1">
    <property type="protein sequence ID" value="ENSP00000505405.1"/>
    <property type="gene ID" value="ENSG00000131043.13"/>
</dbReference>
<dbReference type="Ensembl" id="ENST00000680811.1">
    <property type="protein sequence ID" value="ENSP00000506185.1"/>
    <property type="gene ID" value="ENSG00000131043.13"/>
</dbReference>
<dbReference type="Ensembl" id="ENST00000680933.1">
    <property type="protein sequence ID" value="ENSP00000505061.1"/>
    <property type="gene ID" value="ENSG00000131043.13"/>
</dbReference>
<dbReference type="GeneID" id="25980"/>
<dbReference type="KEGG" id="hsa:25980"/>
<dbReference type="MANE-Select" id="ENST00000320849.9">
    <property type="protein sequence ID" value="ENSP00000313674.4"/>
    <property type="RefSeq nucleotide sequence ID" value="NM_001271874.2"/>
    <property type="RefSeq protein sequence ID" value="NP_001258803.1"/>
</dbReference>
<dbReference type="UCSC" id="uc002xfc.4">
    <property type="organism name" value="human"/>
</dbReference>
<dbReference type="AGR" id="HGNC:15886"/>
<dbReference type="CTD" id="25980"/>
<dbReference type="DisGeNET" id="25980"/>
<dbReference type="GeneCards" id="AAR2"/>
<dbReference type="HGNC" id="HGNC:15886">
    <property type="gene designation" value="AAR2"/>
</dbReference>
<dbReference type="HPA" id="ENSG00000131043">
    <property type="expression patterns" value="Low tissue specificity"/>
</dbReference>
<dbReference type="MIM" id="617365">
    <property type="type" value="gene"/>
</dbReference>
<dbReference type="neXtProt" id="NX_Q9Y312"/>
<dbReference type="OpenTargets" id="ENSG00000131043"/>
<dbReference type="PharmGKB" id="PA25753"/>
<dbReference type="VEuPathDB" id="HostDB:ENSG00000131043"/>
<dbReference type="eggNOG" id="KOG3937">
    <property type="taxonomic scope" value="Eukaryota"/>
</dbReference>
<dbReference type="GeneTree" id="ENSGT00390000007796"/>
<dbReference type="HOGENOM" id="CLU_036039_0_0_1"/>
<dbReference type="InParanoid" id="Q9Y312"/>
<dbReference type="OMA" id="VWQSGGL"/>
<dbReference type="OrthoDB" id="201752at2759"/>
<dbReference type="PAN-GO" id="Q9Y312">
    <property type="GO annotations" value="1 GO annotation based on evolutionary models"/>
</dbReference>
<dbReference type="PhylomeDB" id="Q9Y312"/>
<dbReference type="TreeFam" id="TF315089"/>
<dbReference type="PathwayCommons" id="Q9Y312"/>
<dbReference type="SignaLink" id="Q9Y312"/>
<dbReference type="BioGRID-ORCS" id="25980">
    <property type="hits" value="30 hits in 1166 CRISPR screens"/>
</dbReference>
<dbReference type="ChiTaRS" id="AAR2">
    <property type="organism name" value="human"/>
</dbReference>
<dbReference type="GenomeRNAi" id="25980"/>
<dbReference type="Pharos" id="Q9Y312">
    <property type="development level" value="Tbio"/>
</dbReference>
<dbReference type="PRO" id="PR:Q9Y312"/>
<dbReference type="Proteomes" id="UP000005640">
    <property type="component" value="Chromosome 20"/>
</dbReference>
<dbReference type="RNAct" id="Q9Y312">
    <property type="molecule type" value="protein"/>
</dbReference>
<dbReference type="Bgee" id="ENSG00000131043">
    <property type="expression patterns" value="Expressed in lower esophagus muscularis layer and 188 other cell types or tissues"/>
</dbReference>
<dbReference type="ExpressionAtlas" id="Q9Y312">
    <property type="expression patterns" value="baseline and differential"/>
</dbReference>
<dbReference type="GO" id="GO:0005681">
    <property type="term" value="C:spliceosomal complex"/>
    <property type="evidence" value="ECO:0007669"/>
    <property type="project" value="UniProtKB-KW"/>
</dbReference>
<dbReference type="GO" id="GO:0005682">
    <property type="term" value="C:U5 snRNP"/>
    <property type="evidence" value="ECO:0000250"/>
    <property type="project" value="FlyBase"/>
</dbReference>
<dbReference type="GO" id="GO:0000244">
    <property type="term" value="P:spliceosomal tri-snRNP complex assembly"/>
    <property type="evidence" value="ECO:0000250"/>
    <property type="project" value="FlyBase"/>
</dbReference>
<dbReference type="CDD" id="cd13778">
    <property type="entry name" value="Aar2_C"/>
    <property type="match status" value="1"/>
</dbReference>
<dbReference type="CDD" id="cd13777">
    <property type="entry name" value="Aar2_N"/>
    <property type="match status" value="1"/>
</dbReference>
<dbReference type="FunFam" id="1.25.40.550:FF:000001">
    <property type="entry name" value="AAR2 splicing factor homolog"/>
    <property type="match status" value="1"/>
</dbReference>
<dbReference type="FunFam" id="2.60.34.20:FF:000001">
    <property type="entry name" value="protein AAR2 homolog"/>
    <property type="match status" value="1"/>
</dbReference>
<dbReference type="Gene3D" id="2.60.34.20">
    <property type="match status" value="1"/>
</dbReference>
<dbReference type="Gene3D" id="1.25.40.550">
    <property type="entry name" value="Aar2, C-terminal domain-like"/>
    <property type="match status" value="1"/>
</dbReference>
<dbReference type="InterPro" id="IPR007946">
    <property type="entry name" value="AAR2"/>
</dbReference>
<dbReference type="InterPro" id="IPR033648">
    <property type="entry name" value="AAR2_C"/>
</dbReference>
<dbReference type="InterPro" id="IPR038514">
    <property type="entry name" value="AAR2_C_sf"/>
</dbReference>
<dbReference type="InterPro" id="IPR033647">
    <property type="entry name" value="Aar2_N"/>
</dbReference>
<dbReference type="InterPro" id="IPR038516">
    <property type="entry name" value="AAR2_N_sf"/>
</dbReference>
<dbReference type="PANTHER" id="PTHR12689">
    <property type="entry name" value="A1 CISTRON SPLICING FACTOR AAR2-RELATED"/>
    <property type="match status" value="1"/>
</dbReference>
<dbReference type="PANTHER" id="PTHR12689:SF4">
    <property type="entry name" value="PROTEIN AAR2 HOMOLOG"/>
    <property type="match status" value="1"/>
</dbReference>
<dbReference type="Pfam" id="PF05282">
    <property type="entry name" value="AAR2"/>
    <property type="match status" value="1"/>
</dbReference>
<dbReference type="Pfam" id="PF20981">
    <property type="entry name" value="AAR2_1st"/>
    <property type="match status" value="1"/>
</dbReference>
<sequence length="384" mass="43472">MAAVQMDPELAKRLFFEGATVVILNMPKGTEFGIDYNSWEVGPKFRGVKMIPPGIHFLHYSSVDKANPKEVGPRMGFFLSLHQRGLTVLRWSTLREEVDLSPAPESEVEAMRANLQELDQFLGPYPYATLKKWISLTNFISEATVEKLQPENRQICAFSDVLPVLSMKHTKDRVGQNLPRCGIECKSYQEGLARLPEMKPRAGTEIRFSELPTQMFPEGATPAEITKHSMDLSYALETVLNKQFPSSPQDVLGELQFAFVCFLLGNVYEAFEHWKRLLNLLCRSEAAMMKHHTLYINLISILYHQLGEIPADFFVDIVSQDNFLTSTLQVFFSSACSIAVDATLRKKAEKFQAHLTKKFRWDFAAEPEDCAPVVVELPEGIEMG</sequence>
<evidence type="ECO:0000250" key="1">
    <source>
        <dbReference type="UniProtKB" id="P32357"/>
    </source>
</evidence>
<evidence type="ECO:0000269" key="2">
    <source>
    </source>
</evidence>
<evidence type="ECO:0000305" key="3"/>
<evidence type="ECO:0007744" key="4">
    <source>
    </source>
</evidence>
<evidence type="ECO:0007744" key="5">
    <source>
    </source>
</evidence>
<evidence type="ECO:0007744" key="6">
    <source>
    </source>
</evidence>
<evidence type="ECO:0007829" key="7">
    <source>
        <dbReference type="PDB" id="7PJH"/>
    </source>
</evidence>
<gene>
    <name type="primary">AAR2</name>
    <name type="synonym">C20orf4</name>
    <name type="ORF">CGI-23</name>
    <name type="ORF">PRO0225</name>
</gene>
<proteinExistence type="evidence at protein level"/>